<proteinExistence type="evidence at protein level"/>
<reference key="1">
    <citation type="journal article" date="1994" name="J. Biol. Chem.">
        <title>The sperm acrosomal matrix contains a novel member of the pentaxin family of calcium-dependent binding proteins.</title>
        <authorList>
            <person name="Noland T.D."/>
            <person name="Friday B.B."/>
            <person name="Maulit M.T."/>
            <person name="Gerton G.L."/>
        </authorList>
    </citation>
    <scope>NUCLEOTIDE SEQUENCE [MRNA]</scope>
    <scope>PROTEIN SEQUENCE OF 223-227; 328-337 AND 342-377</scope>
    <source>
        <strain>Hartley</strain>
        <tissue>Testis</tissue>
    </source>
</reference>
<reference key="2">
    <citation type="journal article" date="1994" name="J. Biol. Chem.">
        <title>Apexin, an acrosomal pentaxin.</title>
        <authorList>
            <person name="Reid M.S."/>
            <person name="Blobel C.P."/>
        </authorList>
    </citation>
    <scope>NUCLEOTIDE SEQUENCE [MRNA]</scope>
    <scope>PROTEIN SEQUENCE OF 254-279; 316-330 AND 359-389</scope>
    <source>
        <strain>Hartley</strain>
        <tissue>Testis</tissue>
    </source>
</reference>
<name>NPTX2_CAVPO</name>
<sequence length="427" mass="47233">MLALLAAGVAFAVVVLAQDKPLPGSHFVCSAIPPEALFAGCPLPATPMQGVSLSPEEELRAAVLQLRETVVMQKETLGAQREAIRELTSKLARCEGLMAGKAESSKDTMGDLPRDPSRVVEQLSRSLQVLKDRLESLELQLRTNASNTGLPSDFREVLQRRLGELERQLLRKVAELEDEKSLLHNETSAHQQKTENTLNALLQRVTELERGNSAFKSPDAFKVSLPFRTNYLYGKIKKTLPELYSFTICLWLRSSASPGIGTPFSYAVPGQANEIVLIEWGNNPIELLINDKVAQLPLFVSDGKWHHICITWTTRDGLWEAFQDGEKLGTGENLAPWHPIKSGGVLILGQEQDTVGGRFDATQAFVGELSQFNIWDRVLRPQEISNIANCSLNMAGNIIPWVDNNVDVFGGASKWPVETCEERLLDL</sequence>
<keyword id="KW-0106">Calcium</keyword>
<keyword id="KW-0968">Cytoplasmic vesicle</keyword>
<keyword id="KW-0903">Direct protein sequencing</keyword>
<keyword id="KW-1015">Disulfide bond</keyword>
<keyword id="KW-0325">Glycoprotein</keyword>
<keyword id="KW-0479">Metal-binding</keyword>
<keyword id="KW-1185">Reference proteome</keyword>
<keyword id="KW-0732">Signal</keyword>
<evidence type="ECO:0000250" key="1"/>
<evidence type="ECO:0000255" key="2"/>
<evidence type="ECO:0000255" key="3">
    <source>
        <dbReference type="PROSITE-ProRule" id="PRU01172"/>
    </source>
</evidence>
<evidence type="ECO:0000305" key="4"/>
<accession>P47970</accession>
<gene>
    <name type="primary">NPTX2</name>
</gene>
<protein>
    <recommendedName>
        <fullName>Neuronal pentraxin-2</fullName>
        <shortName>NP2</shortName>
    </recommendedName>
    <alternativeName>
        <fullName>Acrosomal pentaxin-like protein p50</fullName>
        <shortName>AM50</shortName>
    </alternativeName>
    <alternativeName>
        <fullName>Neuronal pentraxin II</fullName>
        <shortName>Apexin</shortName>
        <shortName>NP-II</shortName>
    </alternativeName>
</protein>
<dbReference type="EMBL" id="U13234">
    <property type="protein sequence ID" value="AAA64994.1"/>
    <property type="molecule type" value="mRNA"/>
</dbReference>
<dbReference type="EMBL" id="U13236">
    <property type="protein sequence ID" value="AAA64995.1"/>
    <property type="molecule type" value="mRNA"/>
</dbReference>
<dbReference type="PIR" id="A55496">
    <property type="entry name" value="A55496"/>
</dbReference>
<dbReference type="RefSeq" id="NP_001166199.1">
    <property type="nucleotide sequence ID" value="NM_001172728.1"/>
</dbReference>
<dbReference type="SMR" id="P47970"/>
<dbReference type="FunCoup" id="P47970">
    <property type="interactions" value="65"/>
</dbReference>
<dbReference type="GlyCosmos" id="P47970">
    <property type="glycosylation" value="3 sites, No reported glycans"/>
</dbReference>
<dbReference type="GeneID" id="100135579"/>
<dbReference type="KEGG" id="cpoc:100135579"/>
<dbReference type="CTD" id="4885"/>
<dbReference type="eggNOG" id="ENOG502QV29">
    <property type="taxonomic scope" value="Eukaryota"/>
</dbReference>
<dbReference type="InParanoid" id="P47970"/>
<dbReference type="OrthoDB" id="8871962at2759"/>
<dbReference type="Proteomes" id="UP000005447">
    <property type="component" value="Unassembled WGS sequence"/>
</dbReference>
<dbReference type="GO" id="GO:0043160">
    <property type="term" value="C:acrosomal lumen"/>
    <property type="evidence" value="ECO:0007669"/>
    <property type="project" value="UniProtKB-SubCell"/>
</dbReference>
<dbReference type="GO" id="GO:0046872">
    <property type="term" value="F:metal ion binding"/>
    <property type="evidence" value="ECO:0007669"/>
    <property type="project" value="UniProtKB-KW"/>
</dbReference>
<dbReference type="CDD" id="cd00152">
    <property type="entry name" value="PTX"/>
    <property type="match status" value="1"/>
</dbReference>
<dbReference type="FunFam" id="2.60.120.200:FF:000012">
    <property type="entry name" value="neuronal pentraxin receptor"/>
    <property type="match status" value="1"/>
</dbReference>
<dbReference type="Gene3D" id="2.60.120.200">
    <property type="match status" value="1"/>
</dbReference>
<dbReference type="InterPro" id="IPR013320">
    <property type="entry name" value="ConA-like_dom_sf"/>
</dbReference>
<dbReference type="InterPro" id="IPR051360">
    <property type="entry name" value="Neuronal_Pentraxin_Related"/>
</dbReference>
<dbReference type="InterPro" id="IPR030476">
    <property type="entry name" value="Pentaxin_CS"/>
</dbReference>
<dbReference type="InterPro" id="IPR001759">
    <property type="entry name" value="Pentraxin-related"/>
</dbReference>
<dbReference type="PANTHER" id="PTHR19277:SF1">
    <property type="entry name" value="NEURONAL PENTRAXIN-2"/>
    <property type="match status" value="1"/>
</dbReference>
<dbReference type="PANTHER" id="PTHR19277">
    <property type="entry name" value="PENTRAXIN"/>
    <property type="match status" value="1"/>
</dbReference>
<dbReference type="Pfam" id="PF00354">
    <property type="entry name" value="Pentaxin"/>
    <property type="match status" value="1"/>
</dbReference>
<dbReference type="PRINTS" id="PR00895">
    <property type="entry name" value="PENTAXIN"/>
</dbReference>
<dbReference type="SMART" id="SM00159">
    <property type="entry name" value="PTX"/>
    <property type="match status" value="1"/>
</dbReference>
<dbReference type="SUPFAM" id="SSF49899">
    <property type="entry name" value="Concanavalin A-like lectins/glucanases"/>
    <property type="match status" value="1"/>
</dbReference>
<dbReference type="PROSITE" id="PS00289">
    <property type="entry name" value="PTX_1"/>
    <property type="match status" value="1"/>
</dbReference>
<dbReference type="PROSITE" id="PS51828">
    <property type="entry name" value="PTX_2"/>
    <property type="match status" value="1"/>
</dbReference>
<organism>
    <name type="scientific">Cavia porcellus</name>
    <name type="common">Guinea pig</name>
    <dbReference type="NCBI Taxonomy" id="10141"/>
    <lineage>
        <taxon>Eukaryota</taxon>
        <taxon>Metazoa</taxon>
        <taxon>Chordata</taxon>
        <taxon>Craniata</taxon>
        <taxon>Vertebrata</taxon>
        <taxon>Euteleostomi</taxon>
        <taxon>Mammalia</taxon>
        <taxon>Eutheria</taxon>
        <taxon>Euarchontoglires</taxon>
        <taxon>Glires</taxon>
        <taxon>Rodentia</taxon>
        <taxon>Hystricomorpha</taxon>
        <taxon>Caviidae</taxon>
        <taxon>Cavia</taxon>
    </lineage>
</organism>
<comment type="function">
    <text>May be involved in binding, concentrating, and sorting soluble glycoproteins or glycolipids that are destined for the acrosome.</text>
</comment>
<comment type="cofactor">
    <cofactor evidence="1">
        <name>Ca(2+)</name>
        <dbReference type="ChEBI" id="CHEBI:29108"/>
    </cofactor>
    <text evidence="1">Binds 2 calcium ions per subunit.</text>
</comment>
<comment type="subunit">
    <text evidence="1">Homooligomer or heterooligomer (probably pentamer) with neuronal pentraxin receptor (NPTXR).</text>
</comment>
<comment type="subcellular location">
    <subcellularLocation>
        <location>Cytoplasmic vesicle</location>
        <location>Secretory vesicle</location>
        <location>Acrosome lumen</location>
    </subcellularLocation>
    <text>Sperm acrosomal matrix.</text>
</comment>
<comment type="tissue specificity">
    <text>Testis specific.</text>
</comment>
<feature type="signal peptide" evidence="2">
    <location>
        <begin position="1"/>
        <end position="17"/>
    </location>
</feature>
<feature type="chain" id="PRO_0000023550" description="Neuronal pentraxin-2">
    <location>
        <begin position="18"/>
        <end position="427"/>
    </location>
</feature>
<feature type="domain" description="Pentraxin (PTX)" evidence="3">
    <location>
        <begin position="219"/>
        <end position="420"/>
    </location>
</feature>
<feature type="binding site" evidence="1">
    <location>
        <position position="273"/>
    </location>
    <ligand>
        <name>Ca(2+)</name>
        <dbReference type="ChEBI" id="CHEBI:29108"/>
        <label>1</label>
    </ligand>
</feature>
<feature type="binding site" evidence="1">
    <location>
        <position position="351"/>
    </location>
    <ligand>
        <name>Ca(2+)</name>
        <dbReference type="ChEBI" id="CHEBI:29108"/>
        <label>1</label>
    </ligand>
</feature>
<feature type="binding site" evidence="3">
    <location>
        <position position="351"/>
    </location>
    <ligand>
        <name>Ca(2+)</name>
        <dbReference type="ChEBI" id="CHEBI:29108"/>
        <label>2</label>
    </ligand>
</feature>
<feature type="binding site" evidence="1">
    <location>
        <position position="352"/>
    </location>
    <ligand>
        <name>Ca(2+)</name>
        <dbReference type="ChEBI" id="CHEBI:29108"/>
        <label>1</label>
    </ligand>
</feature>
<feature type="binding site" evidence="1">
    <location>
        <position position="353"/>
    </location>
    <ligand>
        <name>Ca(2+)</name>
        <dbReference type="ChEBI" id="CHEBI:29108"/>
        <label>1</label>
    </ligand>
</feature>
<feature type="binding site" evidence="3">
    <location>
        <position position="353"/>
    </location>
    <ligand>
        <name>Ca(2+)</name>
        <dbReference type="ChEBI" id="CHEBI:29108"/>
        <label>2</label>
    </ligand>
</feature>
<feature type="binding site" evidence="3">
    <location>
        <position position="363"/>
    </location>
    <ligand>
        <name>Ca(2+)</name>
        <dbReference type="ChEBI" id="CHEBI:29108"/>
        <label>2</label>
    </ligand>
</feature>
<feature type="glycosylation site" description="N-linked (GlcNAc...) asparagine" evidence="2">
    <location>
        <position position="144"/>
    </location>
</feature>
<feature type="glycosylation site" description="N-linked (GlcNAc...) asparagine" evidence="2">
    <location>
        <position position="185"/>
    </location>
</feature>
<feature type="glycosylation site" description="N-linked (GlcNAc...) asparagine" evidence="2">
    <location>
        <position position="389"/>
    </location>
</feature>
<feature type="disulfide bond" evidence="3">
    <location>
        <begin position="249"/>
        <end position="309"/>
    </location>
</feature>
<feature type="sequence conflict" description="In Ref. 2; AA sequence." evidence="4" ref="2">
    <location>
        <begin position="140"/>
        <end position="141"/>
    </location>
</feature>
<feature type="sequence conflict" description="In Ref. 2; AA sequence." evidence="4" ref="2">
    <original>E</original>
    <variation>S</variation>
    <location>
        <position position="279"/>
    </location>
</feature>
<feature type="sequence conflict" description="In Ref. 2; AA sequence." evidence="4" ref="2">
    <original>G</original>
    <variation>S</variation>
    <location>
        <position position="329"/>
    </location>
</feature>